<accession>Q7CQS3</accession>
<protein>
    <recommendedName>
        <fullName evidence="1">Chaperone modulatory protein CbpM</fullName>
    </recommendedName>
</protein>
<organism>
    <name type="scientific">Salmonella typhimurium (strain LT2 / SGSC1412 / ATCC 700720)</name>
    <dbReference type="NCBI Taxonomy" id="99287"/>
    <lineage>
        <taxon>Bacteria</taxon>
        <taxon>Pseudomonadati</taxon>
        <taxon>Pseudomonadota</taxon>
        <taxon>Gammaproteobacteria</taxon>
        <taxon>Enterobacterales</taxon>
        <taxon>Enterobacteriaceae</taxon>
        <taxon>Salmonella</taxon>
    </lineage>
</organism>
<name>CBPM_SALTY</name>
<evidence type="ECO:0000255" key="1">
    <source>
        <dbReference type="HAMAP-Rule" id="MF_01155"/>
    </source>
</evidence>
<dbReference type="EMBL" id="AE006468">
    <property type="protein sequence ID" value="AAL20043.1"/>
    <property type="molecule type" value="Genomic_DNA"/>
</dbReference>
<dbReference type="RefSeq" id="WP_001284251.1">
    <property type="nucleotide sequence ID" value="NC_003197.2"/>
</dbReference>
<dbReference type="SMR" id="Q7CQS3"/>
<dbReference type="STRING" id="99287.STM1111"/>
<dbReference type="PaxDb" id="99287-STM1111"/>
<dbReference type="KEGG" id="stm:STM1111"/>
<dbReference type="PATRIC" id="fig|99287.12.peg.1176"/>
<dbReference type="HOGENOM" id="CLU_144710_3_1_6"/>
<dbReference type="OMA" id="DWPGIAM"/>
<dbReference type="PhylomeDB" id="Q7CQS3"/>
<dbReference type="BioCyc" id="SENT99287:STM1111-MONOMER"/>
<dbReference type="Proteomes" id="UP000001014">
    <property type="component" value="Chromosome"/>
</dbReference>
<dbReference type="Gene3D" id="1.10.1660.10">
    <property type="match status" value="1"/>
</dbReference>
<dbReference type="HAMAP" id="MF_01155">
    <property type="entry name" value="CbpM"/>
    <property type="match status" value="1"/>
</dbReference>
<dbReference type="InterPro" id="IPR022835">
    <property type="entry name" value="CbpM"/>
</dbReference>
<dbReference type="NCBIfam" id="NF007617">
    <property type="entry name" value="PRK10265.1"/>
    <property type="match status" value="1"/>
</dbReference>
<dbReference type="Pfam" id="PF13591">
    <property type="entry name" value="MerR_2"/>
    <property type="match status" value="1"/>
</dbReference>
<proteinExistence type="inferred from homology"/>
<comment type="function">
    <text evidence="1">Interacts with CbpA and inhibits both the DnaJ-like co-chaperone activity and the DNA binding activity of CbpA. Together with CbpA, modulates the activity of the DnaK chaperone system. Does not inhibit the co-chaperone activity of DnaJ.</text>
</comment>
<comment type="similarity">
    <text evidence="1">Belongs to the CbpM family.</text>
</comment>
<keyword id="KW-1185">Reference proteome</keyword>
<reference key="1">
    <citation type="journal article" date="2001" name="Nature">
        <title>Complete genome sequence of Salmonella enterica serovar Typhimurium LT2.</title>
        <authorList>
            <person name="McClelland M."/>
            <person name="Sanderson K.E."/>
            <person name="Spieth J."/>
            <person name="Clifton S.W."/>
            <person name="Latreille P."/>
            <person name="Courtney L."/>
            <person name="Porwollik S."/>
            <person name="Ali J."/>
            <person name="Dante M."/>
            <person name="Du F."/>
            <person name="Hou S."/>
            <person name="Layman D."/>
            <person name="Leonard S."/>
            <person name="Nguyen C."/>
            <person name="Scott K."/>
            <person name="Holmes A."/>
            <person name="Grewal N."/>
            <person name="Mulvaney E."/>
            <person name="Ryan E."/>
            <person name="Sun H."/>
            <person name="Florea L."/>
            <person name="Miller W."/>
            <person name="Stoneking T."/>
            <person name="Nhan M."/>
            <person name="Waterston R."/>
            <person name="Wilson R.K."/>
        </authorList>
    </citation>
    <scope>NUCLEOTIDE SEQUENCE [LARGE SCALE GENOMIC DNA]</scope>
    <source>
        <strain>LT2 / SGSC1412 / ATCC 700720</strain>
    </source>
</reference>
<gene>
    <name evidence="1" type="primary">cbpM</name>
    <name type="ordered locus">STM1111</name>
</gene>
<feature type="chain" id="PRO_0000211632" description="Chaperone modulatory protein CbpM">
    <location>
        <begin position="1"/>
        <end position="101"/>
    </location>
</feature>
<sequence>MANITVTFTITEFCLHTGVTEEELNEIVGLGVIEPYEDDNADWQFDDRAASVVQRALRLREELALDWPGIAVALTLLEENSRLREENRLLLQRLSRFISHP</sequence>